<reference key="1">
    <citation type="journal article" date="2010" name="Environ. Microbiol.">
        <title>The genome of Syntrophomonas wolfei: new insights into syntrophic metabolism and biohydrogen production.</title>
        <authorList>
            <person name="Sieber J.R."/>
            <person name="Sims D.R."/>
            <person name="Han C."/>
            <person name="Kim E."/>
            <person name="Lykidis A."/>
            <person name="Lapidus A.L."/>
            <person name="McDonnald E."/>
            <person name="Rohlin L."/>
            <person name="Culley D.E."/>
            <person name="Gunsalus R."/>
            <person name="McInerney M.J."/>
        </authorList>
    </citation>
    <scope>NUCLEOTIDE SEQUENCE [LARGE SCALE GENOMIC DNA]</scope>
    <source>
        <strain>DSM 2245B / Goettingen</strain>
    </source>
</reference>
<protein>
    <recommendedName>
        <fullName evidence="1">Lon protease</fullName>
        <ecNumber evidence="1">3.4.21.53</ecNumber>
    </recommendedName>
    <alternativeName>
        <fullName evidence="1">ATP-dependent protease La</fullName>
    </alternativeName>
</protein>
<feature type="chain" id="PRO_0000396607" description="Lon protease">
    <location>
        <begin position="1"/>
        <end position="812"/>
    </location>
</feature>
<feature type="domain" description="Lon N-terminal" evidence="3">
    <location>
        <begin position="12"/>
        <end position="205"/>
    </location>
</feature>
<feature type="domain" description="Lon proteolytic" evidence="2">
    <location>
        <begin position="593"/>
        <end position="774"/>
    </location>
</feature>
<feature type="active site" evidence="1">
    <location>
        <position position="680"/>
    </location>
</feature>
<feature type="active site" evidence="1">
    <location>
        <position position="723"/>
    </location>
</feature>
<feature type="binding site" evidence="1">
    <location>
        <begin position="357"/>
        <end position="364"/>
    </location>
    <ligand>
        <name>ATP</name>
        <dbReference type="ChEBI" id="CHEBI:30616"/>
    </ligand>
</feature>
<comment type="function">
    <text evidence="1">ATP-dependent serine protease that mediates the selective degradation of mutant and abnormal proteins as well as certain short-lived regulatory proteins. Required for cellular homeostasis and for survival from DNA damage and developmental changes induced by stress. Degrades polypeptides processively to yield small peptide fragments that are 5 to 10 amino acids long. Binds to DNA in a double-stranded, site-specific manner.</text>
</comment>
<comment type="catalytic activity">
    <reaction evidence="1">
        <text>Hydrolysis of proteins in presence of ATP.</text>
        <dbReference type="EC" id="3.4.21.53"/>
    </reaction>
</comment>
<comment type="subunit">
    <text evidence="1">Homohexamer. Organized in a ring with a central cavity.</text>
</comment>
<comment type="subcellular location">
    <subcellularLocation>
        <location evidence="1">Cytoplasm</location>
    </subcellularLocation>
</comment>
<comment type="induction">
    <text evidence="1">By heat shock.</text>
</comment>
<comment type="similarity">
    <text evidence="1">Belongs to the peptidase S16 family.</text>
</comment>
<accession>Q0AWF3</accession>
<gene>
    <name evidence="1" type="primary">lon</name>
    <name type="ordered locus">Swol_1653</name>
</gene>
<proteinExistence type="inferred from homology"/>
<keyword id="KW-0067">ATP-binding</keyword>
<keyword id="KW-0963">Cytoplasm</keyword>
<keyword id="KW-0378">Hydrolase</keyword>
<keyword id="KW-0547">Nucleotide-binding</keyword>
<keyword id="KW-0645">Protease</keyword>
<keyword id="KW-1185">Reference proteome</keyword>
<keyword id="KW-0720">Serine protease</keyword>
<keyword id="KW-0346">Stress response</keyword>
<sequence length="812" mass="91461">MPTEEHQTYRELPMLPLRGVLVFPYTVIHLDVGRKKSINAIEDAMLGSKEIFLATQKEAQTDEPDEEDIYEVGTVAEIRQILKMPGGTMRVLVEGLFRAEINAYLANDPYMKVRVEELRDKKIKSPELEALMRNLVGQFEQYVRMSKKIPPETVVSVVAIEEGGRLADVIASHLNLRINEKQRILELSDINKRLNYLCELLAKEMEVLELERKINIRVRKQMEKTQKEYYLREQIKAIQKELGEKDERSSEVEEFRERIKKANMPKDAEEKAFKELERLEKMPPMVAEAVVVRNYLDWILSLPWSLETRDRLDLKAAEAILDEDHYGLEKPKERILEYLAIRKLAKKMKGPILCLVGPPGVGKTSLGKSVGRSLGRKFIRMSLGGIRDEAEIRGHRRTYVGSMPGRILQGMKTAGSKNPVFLLDEIDKMTMDFRGDPASALLEVLDPEQNYIFSDHYLEIPFDLSKVMFITTANSVFNIPRPLLDRMEIIEITGYTEEDKVHIATDYLVPKQIKEHGLKESNITFSEGTLRRIIREYTREAGVRNLERQIASICRKVARQVVEDKDTFVHVASNSLNRFLGAGRYRYGVAESENQVGVATGLAWTESGGDILSIEVALLKGKGNLTLTGKLGEVMKESAQAALTYVRSKADELGINDEIRDKYDVHIHIPEGAIPKDGPSAGITLATALASAMSGLPVRSDVAMTGEITLRGRILPIGGVKEKILAAHRAGIAKVLLPVENKKDLAEIPAPVKRKIKLVLVSHMDEVLEETLLKLEAIQPGEDFPGVLLNPELVGENLNQDRVEPEANKDLC</sequence>
<name>LON_SYNWW</name>
<evidence type="ECO:0000255" key="1">
    <source>
        <dbReference type="HAMAP-Rule" id="MF_01973"/>
    </source>
</evidence>
<evidence type="ECO:0000255" key="2">
    <source>
        <dbReference type="PROSITE-ProRule" id="PRU01122"/>
    </source>
</evidence>
<evidence type="ECO:0000255" key="3">
    <source>
        <dbReference type="PROSITE-ProRule" id="PRU01123"/>
    </source>
</evidence>
<dbReference type="EC" id="3.4.21.53" evidence="1"/>
<dbReference type="EMBL" id="CP000448">
    <property type="protein sequence ID" value="ABI68951.1"/>
    <property type="molecule type" value="Genomic_DNA"/>
</dbReference>
<dbReference type="RefSeq" id="WP_011641049.1">
    <property type="nucleotide sequence ID" value="NC_008346.1"/>
</dbReference>
<dbReference type="SMR" id="Q0AWF3"/>
<dbReference type="STRING" id="335541.Swol_1653"/>
<dbReference type="MEROPS" id="S16.001"/>
<dbReference type="KEGG" id="swo:Swol_1653"/>
<dbReference type="eggNOG" id="COG0466">
    <property type="taxonomic scope" value="Bacteria"/>
</dbReference>
<dbReference type="HOGENOM" id="CLU_004109_4_3_9"/>
<dbReference type="OrthoDB" id="9803599at2"/>
<dbReference type="Proteomes" id="UP000001968">
    <property type="component" value="Chromosome"/>
</dbReference>
<dbReference type="GO" id="GO:0005737">
    <property type="term" value="C:cytoplasm"/>
    <property type="evidence" value="ECO:0007669"/>
    <property type="project" value="UniProtKB-SubCell"/>
</dbReference>
<dbReference type="GO" id="GO:0005524">
    <property type="term" value="F:ATP binding"/>
    <property type="evidence" value="ECO:0007669"/>
    <property type="project" value="UniProtKB-UniRule"/>
</dbReference>
<dbReference type="GO" id="GO:0016887">
    <property type="term" value="F:ATP hydrolysis activity"/>
    <property type="evidence" value="ECO:0007669"/>
    <property type="project" value="UniProtKB-UniRule"/>
</dbReference>
<dbReference type="GO" id="GO:0004176">
    <property type="term" value="F:ATP-dependent peptidase activity"/>
    <property type="evidence" value="ECO:0007669"/>
    <property type="project" value="UniProtKB-UniRule"/>
</dbReference>
<dbReference type="GO" id="GO:0043565">
    <property type="term" value="F:sequence-specific DNA binding"/>
    <property type="evidence" value="ECO:0007669"/>
    <property type="project" value="UniProtKB-UniRule"/>
</dbReference>
<dbReference type="GO" id="GO:0004252">
    <property type="term" value="F:serine-type endopeptidase activity"/>
    <property type="evidence" value="ECO:0007669"/>
    <property type="project" value="UniProtKB-UniRule"/>
</dbReference>
<dbReference type="GO" id="GO:0034605">
    <property type="term" value="P:cellular response to heat"/>
    <property type="evidence" value="ECO:0007669"/>
    <property type="project" value="UniProtKB-UniRule"/>
</dbReference>
<dbReference type="GO" id="GO:0006515">
    <property type="term" value="P:protein quality control for misfolded or incompletely synthesized proteins"/>
    <property type="evidence" value="ECO:0007669"/>
    <property type="project" value="UniProtKB-UniRule"/>
</dbReference>
<dbReference type="CDD" id="cd19500">
    <property type="entry name" value="RecA-like_Lon"/>
    <property type="match status" value="1"/>
</dbReference>
<dbReference type="FunFam" id="1.20.5.5270:FF:000002">
    <property type="entry name" value="Lon protease homolog"/>
    <property type="match status" value="1"/>
</dbReference>
<dbReference type="FunFam" id="3.40.50.300:FF:000382">
    <property type="entry name" value="Lon protease homolog 2, peroxisomal"/>
    <property type="match status" value="1"/>
</dbReference>
<dbReference type="Gene3D" id="1.10.8.60">
    <property type="match status" value="1"/>
</dbReference>
<dbReference type="Gene3D" id="1.20.5.5270">
    <property type="match status" value="1"/>
</dbReference>
<dbReference type="Gene3D" id="1.20.58.1480">
    <property type="match status" value="1"/>
</dbReference>
<dbReference type="Gene3D" id="3.30.230.10">
    <property type="match status" value="1"/>
</dbReference>
<dbReference type="Gene3D" id="2.30.130.40">
    <property type="entry name" value="LON domain-like"/>
    <property type="match status" value="1"/>
</dbReference>
<dbReference type="Gene3D" id="3.40.50.300">
    <property type="entry name" value="P-loop containing nucleotide triphosphate hydrolases"/>
    <property type="match status" value="1"/>
</dbReference>
<dbReference type="HAMAP" id="MF_01973">
    <property type="entry name" value="lon_bact"/>
    <property type="match status" value="1"/>
</dbReference>
<dbReference type="InterPro" id="IPR003593">
    <property type="entry name" value="AAA+_ATPase"/>
</dbReference>
<dbReference type="InterPro" id="IPR003959">
    <property type="entry name" value="ATPase_AAA_core"/>
</dbReference>
<dbReference type="InterPro" id="IPR027543">
    <property type="entry name" value="Lon_bac"/>
</dbReference>
<dbReference type="InterPro" id="IPR004815">
    <property type="entry name" value="Lon_bac/euk-typ"/>
</dbReference>
<dbReference type="InterPro" id="IPR054594">
    <property type="entry name" value="Lon_lid"/>
</dbReference>
<dbReference type="InterPro" id="IPR008269">
    <property type="entry name" value="Lon_proteolytic"/>
</dbReference>
<dbReference type="InterPro" id="IPR027065">
    <property type="entry name" value="Lon_Prtase"/>
</dbReference>
<dbReference type="InterPro" id="IPR003111">
    <property type="entry name" value="Lon_prtase_N"/>
</dbReference>
<dbReference type="InterPro" id="IPR046336">
    <property type="entry name" value="Lon_prtase_N_sf"/>
</dbReference>
<dbReference type="InterPro" id="IPR027417">
    <property type="entry name" value="P-loop_NTPase"/>
</dbReference>
<dbReference type="InterPro" id="IPR008268">
    <property type="entry name" value="Peptidase_S16_AS"/>
</dbReference>
<dbReference type="InterPro" id="IPR015947">
    <property type="entry name" value="PUA-like_sf"/>
</dbReference>
<dbReference type="InterPro" id="IPR020568">
    <property type="entry name" value="Ribosomal_Su5_D2-typ_SF"/>
</dbReference>
<dbReference type="InterPro" id="IPR014721">
    <property type="entry name" value="Ribsml_uS5_D2-typ_fold_subgr"/>
</dbReference>
<dbReference type="NCBIfam" id="TIGR00763">
    <property type="entry name" value="lon"/>
    <property type="match status" value="1"/>
</dbReference>
<dbReference type="NCBIfam" id="NF008053">
    <property type="entry name" value="PRK10787.1"/>
    <property type="match status" value="1"/>
</dbReference>
<dbReference type="PANTHER" id="PTHR10046">
    <property type="entry name" value="ATP DEPENDENT LON PROTEASE FAMILY MEMBER"/>
    <property type="match status" value="1"/>
</dbReference>
<dbReference type="Pfam" id="PF00004">
    <property type="entry name" value="AAA"/>
    <property type="match status" value="1"/>
</dbReference>
<dbReference type="Pfam" id="PF05362">
    <property type="entry name" value="Lon_C"/>
    <property type="match status" value="1"/>
</dbReference>
<dbReference type="Pfam" id="PF22667">
    <property type="entry name" value="Lon_lid"/>
    <property type="match status" value="1"/>
</dbReference>
<dbReference type="Pfam" id="PF02190">
    <property type="entry name" value="LON_substr_bdg"/>
    <property type="match status" value="1"/>
</dbReference>
<dbReference type="PIRSF" id="PIRSF001174">
    <property type="entry name" value="Lon_proteas"/>
    <property type="match status" value="1"/>
</dbReference>
<dbReference type="PRINTS" id="PR00830">
    <property type="entry name" value="ENDOLAPTASE"/>
</dbReference>
<dbReference type="SMART" id="SM00382">
    <property type="entry name" value="AAA"/>
    <property type="match status" value="1"/>
</dbReference>
<dbReference type="SMART" id="SM00464">
    <property type="entry name" value="LON"/>
    <property type="match status" value="1"/>
</dbReference>
<dbReference type="SUPFAM" id="SSF52540">
    <property type="entry name" value="P-loop containing nucleoside triphosphate hydrolases"/>
    <property type="match status" value="1"/>
</dbReference>
<dbReference type="SUPFAM" id="SSF88697">
    <property type="entry name" value="PUA domain-like"/>
    <property type="match status" value="1"/>
</dbReference>
<dbReference type="SUPFAM" id="SSF54211">
    <property type="entry name" value="Ribosomal protein S5 domain 2-like"/>
    <property type="match status" value="1"/>
</dbReference>
<dbReference type="PROSITE" id="PS51787">
    <property type="entry name" value="LON_N"/>
    <property type="match status" value="1"/>
</dbReference>
<dbReference type="PROSITE" id="PS51786">
    <property type="entry name" value="LON_PROTEOLYTIC"/>
    <property type="match status" value="1"/>
</dbReference>
<dbReference type="PROSITE" id="PS01046">
    <property type="entry name" value="LON_SER"/>
    <property type="match status" value="1"/>
</dbReference>
<organism>
    <name type="scientific">Syntrophomonas wolfei subsp. wolfei (strain DSM 2245B / Goettingen)</name>
    <dbReference type="NCBI Taxonomy" id="335541"/>
    <lineage>
        <taxon>Bacteria</taxon>
        <taxon>Bacillati</taxon>
        <taxon>Bacillota</taxon>
        <taxon>Clostridia</taxon>
        <taxon>Eubacteriales</taxon>
        <taxon>Syntrophomonadaceae</taxon>
        <taxon>Syntrophomonas</taxon>
    </lineage>
</organism>